<evidence type="ECO:0000255" key="1">
    <source>
        <dbReference type="HAMAP-Rule" id="MF_00528"/>
    </source>
</evidence>
<evidence type="ECO:0000305" key="2"/>
<name>NTPPB_YERPA</name>
<keyword id="KW-0963">Cytoplasm</keyword>
<keyword id="KW-0378">Hydrolase</keyword>
<keyword id="KW-0546">Nucleotide metabolism</keyword>
<sequence length="198" mass="21573">MPQLVLASTSSYRRALLEKLQLPFITDAPETDETPHAGESTEALVQRLASAKAQALAGRYPQHLIIGSDQVCVIDGKITGKPLQYSTAVKQLQQASGQCVTFYTGLTLLNTANNSINCTCETFDVYFRTLSQAEIDGYLLREQPWNCAGSFKSEGLGITLFERLAGRDPNTLIGLPLIALTQMLIEQGVNPLTVKPVE</sequence>
<protein>
    <recommendedName>
        <fullName evidence="1">7-methyl-GTP pyrophosphatase</fullName>
        <shortName evidence="1">m(7)GTP pyrophosphatase</shortName>
        <ecNumber evidence="1">3.6.1.-</ecNumber>
    </recommendedName>
</protein>
<gene>
    <name type="ordered locus">YPA_1932</name>
</gene>
<comment type="function">
    <text evidence="1">Nucleoside triphosphate pyrophosphatase that hydrolyzes 7-methyl-GTP (m(7)GTP). May have a dual role in cell division arrest and in preventing the incorporation of modified nucleotides into cellular nucleic acids.</text>
</comment>
<comment type="catalytic activity">
    <reaction evidence="1">
        <text>N(7)-methyl-GTP + H2O = N(7)-methyl-GMP + diphosphate + H(+)</text>
        <dbReference type="Rhea" id="RHEA:58744"/>
        <dbReference type="ChEBI" id="CHEBI:15377"/>
        <dbReference type="ChEBI" id="CHEBI:15378"/>
        <dbReference type="ChEBI" id="CHEBI:33019"/>
        <dbReference type="ChEBI" id="CHEBI:58285"/>
        <dbReference type="ChEBI" id="CHEBI:87133"/>
    </reaction>
</comment>
<comment type="cofactor">
    <cofactor evidence="1">
        <name>a divalent metal cation</name>
        <dbReference type="ChEBI" id="CHEBI:60240"/>
    </cofactor>
</comment>
<comment type="subcellular location">
    <subcellularLocation>
        <location evidence="1">Cytoplasm</location>
    </subcellularLocation>
</comment>
<comment type="similarity">
    <text evidence="1">Belongs to the Maf family. YceF subfamily.</text>
</comment>
<comment type="sequence caution" evidence="2">
    <conflict type="erroneous initiation">
        <sequence resource="EMBL-CDS" id="ABG13898"/>
    </conflict>
</comment>
<organism>
    <name type="scientific">Yersinia pestis bv. Antiqua (strain Antiqua)</name>
    <dbReference type="NCBI Taxonomy" id="360102"/>
    <lineage>
        <taxon>Bacteria</taxon>
        <taxon>Pseudomonadati</taxon>
        <taxon>Pseudomonadota</taxon>
        <taxon>Gammaproteobacteria</taxon>
        <taxon>Enterobacterales</taxon>
        <taxon>Yersiniaceae</taxon>
        <taxon>Yersinia</taxon>
    </lineage>
</organism>
<feature type="chain" id="PRO_0000267472" description="7-methyl-GTP pyrophosphatase">
    <location>
        <begin position="1"/>
        <end position="198"/>
    </location>
</feature>
<feature type="active site" description="Proton acceptor" evidence="1">
    <location>
        <position position="69"/>
    </location>
</feature>
<feature type="site" description="Important for substrate specificity" evidence="1">
    <location>
        <position position="12"/>
    </location>
</feature>
<feature type="site" description="Important for substrate specificity" evidence="1">
    <location>
        <position position="70"/>
    </location>
</feature>
<feature type="site" description="Important for substrate specificity" evidence="1">
    <location>
        <position position="154"/>
    </location>
</feature>
<proteinExistence type="inferred from homology"/>
<reference key="1">
    <citation type="journal article" date="2006" name="J. Bacteriol.">
        <title>Complete genome sequence of Yersinia pestis strains Antiqua and Nepal516: evidence of gene reduction in an emerging pathogen.</title>
        <authorList>
            <person name="Chain P.S.G."/>
            <person name="Hu P."/>
            <person name="Malfatti S.A."/>
            <person name="Radnedge L."/>
            <person name="Larimer F."/>
            <person name="Vergez L.M."/>
            <person name="Worsham P."/>
            <person name="Chu M.C."/>
            <person name="Andersen G.L."/>
        </authorList>
    </citation>
    <scope>NUCLEOTIDE SEQUENCE [LARGE SCALE GENOMIC DNA]</scope>
    <source>
        <strain>Antiqua</strain>
    </source>
</reference>
<dbReference type="EC" id="3.6.1.-" evidence="1"/>
<dbReference type="EMBL" id="CP000308">
    <property type="protein sequence ID" value="ABG13898.1"/>
    <property type="status" value="ALT_INIT"/>
    <property type="molecule type" value="Genomic_DNA"/>
</dbReference>
<dbReference type="RefSeq" id="WP_002210928.1">
    <property type="nucleotide sequence ID" value="NZ_CP009906.1"/>
</dbReference>
<dbReference type="SMR" id="Q1C6M4"/>
<dbReference type="KEGG" id="ypa:YPA_1932"/>
<dbReference type="Proteomes" id="UP000001971">
    <property type="component" value="Chromosome"/>
</dbReference>
<dbReference type="GO" id="GO:0005737">
    <property type="term" value="C:cytoplasm"/>
    <property type="evidence" value="ECO:0007669"/>
    <property type="project" value="UniProtKB-SubCell"/>
</dbReference>
<dbReference type="GO" id="GO:0047429">
    <property type="term" value="F:nucleoside triphosphate diphosphatase activity"/>
    <property type="evidence" value="ECO:0007669"/>
    <property type="project" value="InterPro"/>
</dbReference>
<dbReference type="GO" id="GO:0009117">
    <property type="term" value="P:nucleotide metabolic process"/>
    <property type="evidence" value="ECO:0007669"/>
    <property type="project" value="UniProtKB-KW"/>
</dbReference>
<dbReference type="CDD" id="cd00555">
    <property type="entry name" value="Maf"/>
    <property type="match status" value="1"/>
</dbReference>
<dbReference type="FunFam" id="3.90.950.10:FF:000005">
    <property type="entry name" value="7-methyl-GTP pyrophosphatase"/>
    <property type="match status" value="1"/>
</dbReference>
<dbReference type="Gene3D" id="3.90.950.10">
    <property type="match status" value="1"/>
</dbReference>
<dbReference type="HAMAP" id="MF_00528">
    <property type="entry name" value="Maf"/>
    <property type="match status" value="1"/>
</dbReference>
<dbReference type="InterPro" id="IPR029001">
    <property type="entry name" value="ITPase-like_fam"/>
</dbReference>
<dbReference type="InterPro" id="IPR003697">
    <property type="entry name" value="Maf-like"/>
</dbReference>
<dbReference type="NCBIfam" id="TIGR00172">
    <property type="entry name" value="maf"/>
    <property type="match status" value="1"/>
</dbReference>
<dbReference type="PANTHER" id="PTHR43213:SF10">
    <property type="entry name" value="7-METHYL-GTP PYROPHOSPHATASE"/>
    <property type="match status" value="1"/>
</dbReference>
<dbReference type="PANTHER" id="PTHR43213">
    <property type="entry name" value="BIFUNCTIONAL DTTP/UTP PYROPHOSPHATASE/METHYLTRANSFERASE PROTEIN-RELATED"/>
    <property type="match status" value="1"/>
</dbReference>
<dbReference type="Pfam" id="PF02545">
    <property type="entry name" value="Maf"/>
    <property type="match status" value="1"/>
</dbReference>
<dbReference type="PIRSF" id="PIRSF006305">
    <property type="entry name" value="Maf"/>
    <property type="match status" value="1"/>
</dbReference>
<dbReference type="SUPFAM" id="SSF52972">
    <property type="entry name" value="ITPase-like"/>
    <property type="match status" value="1"/>
</dbReference>
<accession>Q1C6M4</accession>